<keyword id="KW-0067">ATP-binding</keyword>
<keyword id="KW-0963">Cytoplasm</keyword>
<keyword id="KW-0436">Ligase</keyword>
<keyword id="KW-0547">Nucleotide-binding</keyword>
<keyword id="KW-0566">Pantothenate biosynthesis</keyword>
<name>PANC_SHESA</name>
<accession>A0L0R3</accession>
<organism>
    <name type="scientific">Shewanella sp. (strain ANA-3)</name>
    <dbReference type="NCBI Taxonomy" id="94122"/>
    <lineage>
        <taxon>Bacteria</taxon>
        <taxon>Pseudomonadati</taxon>
        <taxon>Pseudomonadota</taxon>
        <taxon>Gammaproteobacteria</taxon>
        <taxon>Alteromonadales</taxon>
        <taxon>Shewanellaceae</taxon>
        <taxon>Shewanella</taxon>
    </lineage>
</organism>
<dbReference type="EC" id="6.3.2.1" evidence="1"/>
<dbReference type="EMBL" id="CP000469">
    <property type="protein sequence ID" value="ABK49632.1"/>
    <property type="molecule type" value="Genomic_DNA"/>
</dbReference>
<dbReference type="RefSeq" id="WP_011718203.1">
    <property type="nucleotide sequence ID" value="NC_008577.1"/>
</dbReference>
<dbReference type="SMR" id="A0L0R3"/>
<dbReference type="STRING" id="94122.Shewana3_3409"/>
<dbReference type="KEGG" id="shn:Shewana3_3409"/>
<dbReference type="eggNOG" id="COG0414">
    <property type="taxonomic scope" value="Bacteria"/>
</dbReference>
<dbReference type="HOGENOM" id="CLU_047148_0_0_6"/>
<dbReference type="OrthoDB" id="9773087at2"/>
<dbReference type="UniPathway" id="UPA00028">
    <property type="reaction ID" value="UER00005"/>
</dbReference>
<dbReference type="Proteomes" id="UP000002589">
    <property type="component" value="Chromosome"/>
</dbReference>
<dbReference type="GO" id="GO:0005829">
    <property type="term" value="C:cytosol"/>
    <property type="evidence" value="ECO:0007669"/>
    <property type="project" value="TreeGrafter"/>
</dbReference>
<dbReference type="GO" id="GO:0005524">
    <property type="term" value="F:ATP binding"/>
    <property type="evidence" value="ECO:0007669"/>
    <property type="project" value="UniProtKB-KW"/>
</dbReference>
<dbReference type="GO" id="GO:0004592">
    <property type="term" value="F:pantoate-beta-alanine ligase activity"/>
    <property type="evidence" value="ECO:0007669"/>
    <property type="project" value="UniProtKB-UniRule"/>
</dbReference>
<dbReference type="GO" id="GO:0015940">
    <property type="term" value="P:pantothenate biosynthetic process"/>
    <property type="evidence" value="ECO:0007669"/>
    <property type="project" value="UniProtKB-UniRule"/>
</dbReference>
<dbReference type="CDD" id="cd00560">
    <property type="entry name" value="PanC"/>
    <property type="match status" value="1"/>
</dbReference>
<dbReference type="FunFam" id="3.30.1300.10:FF:000001">
    <property type="entry name" value="Pantothenate synthetase"/>
    <property type="match status" value="1"/>
</dbReference>
<dbReference type="FunFam" id="3.40.50.620:FF:000013">
    <property type="entry name" value="Pantothenate synthetase"/>
    <property type="match status" value="1"/>
</dbReference>
<dbReference type="Gene3D" id="3.40.50.620">
    <property type="entry name" value="HUPs"/>
    <property type="match status" value="1"/>
</dbReference>
<dbReference type="Gene3D" id="3.30.1300.10">
    <property type="entry name" value="Pantoate-beta-alanine ligase, C-terminal domain"/>
    <property type="match status" value="1"/>
</dbReference>
<dbReference type="HAMAP" id="MF_00158">
    <property type="entry name" value="PanC"/>
    <property type="match status" value="1"/>
</dbReference>
<dbReference type="InterPro" id="IPR004821">
    <property type="entry name" value="Cyt_trans-like"/>
</dbReference>
<dbReference type="InterPro" id="IPR003721">
    <property type="entry name" value="Pantoate_ligase"/>
</dbReference>
<dbReference type="InterPro" id="IPR042176">
    <property type="entry name" value="Pantoate_ligase_C"/>
</dbReference>
<dbReference type="InterPro" id="IPR014729">
    <property type="entry name" value="Rossmann-like_a/b/a_fold"/>
</dbReference>
<dbReference type="NCBIfam" id="TIGR00125">
    <property type="entry name" value="cyt_tran_rel"/>
    <property type="match status" value="1"/>
</dbReference>
<dbReference type="NCBIfam" id="TIGR00018">
    <property type="entry name" value="panC"/>
    <property type="match status" value="1"/>
</dbReference>
<dbReference type="PANTHER" id="PTHR21299">
    <property type="entry name" value="CYTIDYLATE KINASE/PANTOATE-BETA-ALANINE LIGASE"/>
    <property type="match status" value="1"/>
</dbReference>
<dbReference type="PANTHER" id="PTHR21299:SF1">
    <property type="entry name" value="PANTOATE--BETA-ALANINE LIGASE"/>
    <property type="match status" value="1"/>
</dbReference>
<dbReference type="Pfam" id="PF02569">
    <property type="entry name" value="Pantoate_ligase"/>
    <property type="match status" value="1"/>
</dbReference>
<dbReference type="SUPFAM" id="SSF52374">
    <property type="entry name" value="Nucleotidylyl transferase"/>
    <property type="match status" value="1"/>
</dbReference>
<protein>
    <recommendedName>
        <fullName evidence="1">Pantothenate synthetase</fullName>
        <shortName evidence="1">PS</shortName>
        <ecNumber evidence="1">6.3.2.1</ecNumber>
    </recommendedName>
    <alternativeName>
        <fullName evidence="1">Pantoate--beta-alanine ligase</fullName>
    </alternativeName>
    <alternativeName>
        <fullName evidence="1">Pantoate-activating enzyme</fullName>
    </alternativeName>
</protein>
<reference key="1">
    <citation type="submission" date="2006-09" db="EMBL/GenBank/DDBJ databases">
        <title>Complete sequence of chromosome 1 of Shewanella sp. ANA-3.</title>
        <authorList>
            <person name="Copeland A."/>
            <person name="Lucas S."/>
            <person name="Lapidus A."/>
            <person name="Barry K."/>
            <person name="Detter J.C."/>
            <person name="Glavina del Rio T."/>
            <person name="Hammon N."/>
            <person name="Israni S."/>
            <person name="Dalin E."/>
            <person name="Tice H."/>
            <person name="Pitluck S."/>
            <person name="Chertkov O."/>
            <person name="Brettin T."/>
            <person name="Bruce D."/>
            <person name="Han C."/>
            <person name="Tapia R."/>
            <person name="Gilna P."/>
            <person name="Schmutz J."/>
            <person name="Larimer F."/>
            <person name="Land M."/>
            <person name="Hauser L."/>
            <person name="Kyrpides N."/>
            <person name="Kim E."/>
            <person name="Newman D."/>
            <person name="Salticov C."/>
            <person name="Konstantinidis K."/>
            <person name="Klappenback J."/>
            <person name="Tiedje J."/>
            <person name="Richardson P."/>
        </authorList>
    </citation>
    <scope>NUCLEOTIDE SEQUENCE [LARGE SCALE GENOMIC DNA]</scope>
    <source>
        <strain>ANA-3</strain>
    </source>
</reference>
<gene>
    <name evidence="1" type="primary">panC</name>
    <name type="ordered locus">Shewana3_3409</name>
</gene>
<comment type="function">
    <text evidence="1">Catalyzes the condensation of pantoate with beta-alanine in an ATP-dependent reaction via a pantoyl-adenylate intermediate.</text>
</comment>
<comment type="catalytic activity">
    <reaction evidence="1">
        <text>(R)-pantoate + beta-alanine + ATP = (R)-pantothenate + AMP + diphosphate + H(+)</text>
        <dbReference type="Rhea" id="RHEA:10912"/>
        <dbReference type="ChEBI" id="CHEBI:15378"/>
        <dbReference type="ChEBI" id="CHEBI:15980"/>
        <dbReference type="ChEBI" id="CHEBI:29032"/>
        <dbReference type="ChEBI" id="CHEBI:30616"/>
        <dbReference type="ChEBI" id="CHEBI:33019"/>
        <dbReference type="ChEBI" id="CHEBI:57966"/>
        <dbReference type="ChEBI" id="CHEBI:456215"/>
        <dbReference type="EC" id="6.3.2.1"/>
    </reaction>
</comment>
<comment type="pathway">
    <text evidence="1">Cofactor biosynthesis; (R)-pantothenate biosynthesis; (R)-pantothenate from (R)-pantoate and beta-alanine: step 1/1.</text>
</comment>
<comment type="subunit">
    <text evidence="1">Homodimer.</text>
</comment>
<comment type="subcellular location">
    <subcellularLocation>
        <location evidence="1">Cytoplasm</location>
    </subcellularLocation>
</comment>
<comment type="miscellaneous">
    <text evidence="1">The reaction proceeds by a bi uni uni bi ping pong mechanism.</text>
</comment>
<comment type="similarity">
    <text evidence="1">Belongs to the pantothenate synthetase family.</text>
</comment>
<sequence length="281" mass="30251">MITSAHIDDIRTQVRAWHAKGETVAFVPTMGNLHQGHITLVKEAAKKCDHVVVSIFVNPMQFGQNEDLDAYPRTLEADSQALTAAGAELLFTPTPTVIYPKGLAQQTYVEVPGISDVLCGASRPGHFRGVATVVCKLFNIVQPDVAFFGNKDYQQLLVIRTMVEDLSLPIEIIGVDTIREASGLAMSSRNGYLTAEEKAAAPALKKAIDAMAQGIKQGVSIEQVTAEAKASLIAAGFTPDYLEVCHATTLANAETTDQALVILAAAYLGKARLIDNLRFDR</sequence>
<proteinExistence type="inferred from homology"/>
<evidence type="ECO:0000255" key="1">
    <source>
        <dbReference type="HAMAP-Rule" id="MF_00158"/>
    </source>
</evidence>
<feature type="chain" id="PRO_5000165431" description="Pantothenate synthetase">
    <location>
        <begin position="1"/>
        <end position="281"/>
    </location>
</feature>
<feature type="active site" description="Proton donor" evidence="1">
    <location>
        <position position="37"/>
    </location>
</feature>
<feature type="binding site" evidence="1">
    <location>
        <begin position="30"/>
        <end position="37"/>
    </location>
    <ligand>
        <name>ATP</name>
        <dbReference type="ChEBI" id="CHEBI:30616"/>
    </ligand>
</feature>
<feature type="binding site" evidence="1">
    <location>
        <position position="61"/>
    </location>
    <ligand>
        <name>(R)-pantoate</name>
        <dbReference type="ChEBI" id="CHEBI:15980"/>
    </ligand>
</feature>
<feature type="binding site" evidence="1">
    <location>
        <position position="61"/>
    </location>
    <ligand>
        <name>beta-alanine</name>
        <dbReference type="ChEBI" id="CHEBI:57966"/>
    </ligand>
</feature>
<feature type="binding site" evidence="1">
    <location>
        <begin position="149"/>
        <end position="152"/>
    </location>
    <ligand>
        <name>ATP</name>
        <dbReference type="ChEBI" id="CHEBI:30616"/>
    </ligand>
</feature>
<feature type="binding site" evidence="1">
    <location>
        <position position="155"/>
    </location>
    <ligand>
        <name>(R)-pantoate</name>
        <dbReference type="ChEBI" id="CHEBI:15980"/>
    </ligand>
</feature>
<feature type="binding site" evidence="1">
    <location>
        <position position="178"/>
    </location>
    <ligand>
        <name>ATP</name>
        <dbReference type="ChEBI" id="CHEBI:30616"/>
    </ligand>
</feature>
<feature type="binding site" evidence="1">
    <location>
        <begin position="186"/>
        <end position="189"/>
    </location>
    <ligand>
        <name>ATP</name>
        <dbReference type="ChEBI" id="CHEBI:30616"/>
    </ligand>
</feature>